<comment type="function">
    <text evidence="1">Catalyzes the conversion of 1-hydroxy-2-methyl-2-(E)-butenyl 4-diphosphate (HMBPP) into a mixture of isopentenyl diphosphate (IPP) and dimethylallyl diphosphate (DMAPP). Acts in the terminal step of the DOXP/MEP pathway for isoprenoid precursor biosynthesis.</text>
</comment>
<comment type="catalytic activity">
    <reaction evidence="1">
        <text>isopentenyl diphosphate + 2 oxidized [2Fe-2S]-[ferredoxin] + H2O = (2E)-4-hydroxy-3-methylbut-2-enyl diphosphate + 2 reduced [2Fe-2S]-[ferredoxin] + 2 H(+)</text>
        <dbReference type="Rhea" id="RHEA:24488"/>
        <dbReference type="Rhea" id="RHEA-COMP:10000"/>
        <dbReference type="Rhea" id="RHEA-COMP:10001"/>
        <dbReference type="ChEBI" id="CHEBI:15377"/>
        <dbReference type="ChEBI" id="CHEBI:15378"/>
        <dbReference type="ChEBI" id="CHEBI:33737"/>
        <dbReference type="ChEBI" id="CHEBI:33738"/>
        <dbReference type="ChEBI" id="CHEBI:128753"/>
        <dbReference type="ChEBI" id="CHEBI:128769"/>
        <dbReference type="EC" id="1.17.7.4"/>
    </reaction>
</comment>
<comment type="catalytic activity">
    <reaction evidence="1">
        <text>dimethylallyl diphosphate + 2 oxidized [2Fe-2S]-[ferredoxin] + H2O = (2E)-4-hydroxy-3-methylbut-2-enyl diphosphate + 2 reduced [2Fe-2S]-[ferredoxin] + 2 H(+)</text>
        <dbReference type="Rhea" id="RHEA:24825"/>
        <dbReference type="Rhea" id="RHEA-COMP:10000"/>
        <dbReference type="Rhea" id="RHEA-COMP:10001"/>
        <dbReference type="ChEBI" id="CHEBI:15377"/>
        <dbReference type="ChEBI" id="CHEBI:15378"/>
        <dbReference type="ChEBI" id="CHEBI:33737"/>
        <dbReference type="ChEBI" id="CHEBI:33738"/>
        <dbReference type="ChEBI" id="CHEBI:57623"/>
        <dbReference type="ChEBI" id="CHEBI:128753"/>
        <dbReference type="EC" id="1.17.7.4"/>
    </reaction>
</comment>
<comment type="cofactor">
    <cofactor evidence="1">
        <name>[4Fe-4S] cluster</name>
        <dbReference type="ChEBI" id="CHEBI:49883"/>
    </cofactor>
    <text evidence="1">Binds 1 [4Fe-4S] cluster per subunit.</text>
</comment>
<comment type="pathway">
    <text evidence="1">Isoprenoid biosynthesis; dimethylallyl diphosphate biosynthesis; dimethylallyl diphosphate from (2E)-4-hydroxy-3-methylbutenyl diphosphate: step 1/1.</text>
</comment>
<comment type="pathway">
    <text evidence="1">Isoprenoid biosynthesis; isopentenyl diphosphate biosynthesis via DXP pathway; isopentenyl diphosphate from 1-deoxy-D-xylulose 5-phosphate: step 6/6.</text>
</comment>
<comment type="similarity">
    <text evidence="1">Belongs to the IspH family.</text>
</comment>
<organism>
    <name type="scientific">Actinobacillus pleuropneumoniae serotype 7 (strain AP76)</name>
    <dbReference type="NCBI Taxonomy" id="537457"/>
    <lineage>
        <taxon>Bacteria</taxon>
        <taxon>Pseudomonadati</taxon>
        <taxon>Pseudomonadota</taxon>
        <taxon>Gammaproteobacteria</taxon>
        <taxon>Pasteurellales</taxon>
        <taxon>Pasteurellaceae</taxon>
        <taxon>Actinobacillus</taxon>
    </lineage>
</organism>
<sequence length="314" mass="34093">MNILLANPRGFCAGVDRAISIVELALEIHGAPIYVRHEVVHNRFVVDGLKAKGAVFVEELDEVPDDAIVIFSAHGVSQEVRQEAKRRGLKVFDATCPLVTKVHMQVARASKKGTKAILIGHEGHPEVIGTMGQYDNQDAGIFLVESVEDIAKLPVSSQDDLTFMTQTTLSIDDTSDVIEALKEKYPAIQGPRKNDICYATTNRQQAVRELAKQSQLVLVVGSKNSSNSNRLAELASRMGVPSKLIDGPQDIDPSWLDGVETIGITAGASAPEVLVQSVVEHLKTLGVTGVSNLEGCEENMVFEVPKELRIHEVK</sequence>
<name>ISPH_ACTP7</name>
<proteinExistence type="inferred from homology"/>
<gene>
    <name evidence="1" type="primary">ispH</name>
    <name type="ordered locus">APP7_1580</name>
</gene>
<evidence type="ECO:0000255" key="1">
    <source>
        <dbReference type="HAMAP-Rule" id="MF_00191"/>
    </source>
</evidence>
<dbReference type="EC" id="1.17.7.4" evidence="1"/>
<dbReference type="EMBL" id="CP001091">
    <property type="protein sequence ID" value="ACE62232.1"/>
    <property type="molecule type" value="Genomic_DNA"/>
</dbReference>
<dbReference type="RefSeq" id="WP_005602191.1">
    <property type="nucleotide sequence ID" value="NC_010939.1"/>
</dbReference>
<dbReference type="SMR" id="B3GYK1"/>
<dbReference type="KEGG" id="apa:APP7_1580"/>
<dbReference type="HOGENOM" id="CLU_027486_1_0_6"/>
<dbReference type="UniPathway" id="UPA00056">
    <property type="reaction ID" value="UER00097"/>
</dbReference>
<dbReference type="UniPathway" id="UPA00059">
    <property type="reaction ID" value="UER00105"/>
</dbReference>
<dbReference type="Proteomes" id="UP000001226">
    <property type="component" value="Chromosome"/>
</dbReference>
<dbReference type="GO" id="GO:0051539">
    <property type="term" value="F:4 iron, 4 sulfur cluster binding"/>
    <property type="evidence" value="ECO:0007669"/>
    <property type="project" value="UniProtKB-UniRule"/>
</dbReference>
<dbReference type="GO" id="GO:0051745">
    <property type="term" value="F:4-hydroxy-3-methylbut-2-enyl diphosphate reductase activity"/>
    <property type="evidence" value="ECO:0007669"/>
    <property type="project" value="UniProtKB-UniRule"/>
</dbReference>
<dbReference type="GO" id="GO:0046872">
    <property type="term" value="F:metal ion binding"/>
    <property type="evidence" value="ECO:0007669"/>
    <property type="project" value="UniProtKB-KW"/>
</dbReference>
<dbReference type="GO" id="GO:0050992">
    <property type="term" value="P:dimethylallyl diphosphate biosynthetic process"/>
    <property type="evidence" value="ECO:0007669"/>
    <property type="project" value="UniProtKB-UniRule"/>
</dbReference>
<dbReference type="GO" id="GO:0019288">
    <property type="term" value="P:isopentenyl diphosphate biosynthetic process, methylerythritol 4-phosphate pathway"/>
    <property type="evidence" value="ECO:0007669"/>
    <property type="project" value="UniProtKB-UniRule"/>
</dbReference>
<dbReference type="GO" id="GO:0016114">
    <property type="term" value="P:terpenoid biosynthetic process"/>
    <property type="evidence" value="ECO:0007669"/>
    <property type="project" value="UniProtKB-UniRule"/>
</dbReference>
<dbReference type="CDD" id="cd13944">
    <property type="entry name" value="lytB_ispH"/>
    <property type="match status" value="1"/>
</dbReference>
<dbReference type="Gene3D" id="3.40.50.11270">
    <property type="match status" value="1"/>
</dbReference>
<dbReference type="Gene3D" id="3.40.1010.20">
    <property type="entry name" value="4-hydroxy-3-methylbut-2-enyl diphosphate reductase, catalytic domain"/>
    <property type="match status" value="2"/>
</dbReference>
<dbReference type="HAMAP" id="MF_00191">
    <property type="entry name" value="IspH"/>
    <property type="match status" value="1"/>
</dbReference>
<dbReference type="InterPro" id="IPR003451">
    <property type="entry name" value="LytB/IspH"/>
</dbReference>
<dbReference type="NCBIfam" id="TIGR00216">
    <property type="entry name" value="ispH_lytB"/>
    <property type="match status" value="1"/>
</dbReference>
<dbReference type="NCBIfam" id="NF002188">
    <property type="entry name" value="PRK01045.1-2"/>
    <property type="match status" value="1"/>
</dbReference>
<dbReference type="NCBIfam" id="NF002190">
    <property type="entry name" value="PRK01045.1-4"/>
    <property type="match status" value="1"/>
</dbReference>
<dbReference type="PANTHER" id="PTHR30426">
    <property type="entry name" value="4-HYDROXY-3-METHYLBUT-2-ENYL DIPHOSPHATE REDUCTASE"/>
    <property type="match status" value="1"/>
</dbReference>
<dbReference type="PANTHER" id="PTHR30426:SF0">
    <property type="entry name" value="4-HYDROXY-3-METHYLBUT-2-ENYL DIPHOSPHATE REDUCTASE"/>
    <property type="match status" value="1"/>
</dbReference>
<dbReference type="Pfam" id="PF02401">
    <property type="entry name" value="LYTB"/>
    <property type="match status" value="1"/>
</dbReference>
<keyword id="KW-0004">4Fe-4S</keyword>
<keyword id="KW-0408">Iron</keyword>
<keyword id="KW-0411">Iron-sulfur</keyword>
<keyword id="KW-0414">Isoprene biosynthesis</keyword>
<keyword id="KW-0479">Metal-binding</keyword>
<keyword id="KW-0560">Oxidoreductase</keyword>
<protein>
    <recommendedName>
        <fullName evidence="1">4-hydroxy-3-methylbut-2-enyl diphosphate reductase</fullName>
        <shortName evidence="1">HMBPP reductase</shortName>
        <ecNumber evidence="1">1.17.7.4</ecNumber>
    </recommendedName>
</protein>
<feature type="chain" id="PRO_1000098928" description="4-hydroxy-3-methylbut-2-enyl diphosphate reductase">
    <location>
        <begin position="1"/>
        <end position="314"/>
    </location>
</feature>
<feature type="active site" description="Proton donor" evidence="1">
    <location>
        <position position="126"/>
    </location>
</feature>
<feature type="binding site" evidence="1">
    <location>
        <position position="12"/>
    </location>
    <ligand>
        <name>[4Fe-4S] cluster</name>
        <dbReference type="ChEBI" id="CHEBI:49883"/>
    </ligand>
</feature>
<feature type="binding site" evidence="1">
    <location>
        <position position="41"/>
    </location>
    <ligand>
        <name>(2E)-4-hydroxy-3-methylbut-2-enyl diphosphate</name>
        <dbReference type="ChEBI" id="CHEBI:128753"/>
    </ligand>
</feature>
<feature type="binding site" evidence="1">
    <location>
        <position position="41"/>
    </location>
    <ligand>
        <name>dimethylallyl diphosphate</name>
        <dbReference type="ChEBI" id="CHEBI:57623"/>
    </ligand>
</feature>
<feature type="binding site" evidence="1">
    <location>
        <position position="41"/>
    </location>
    <ligand>
        <name>isopentenyl diphosphate</name>
        <dbReference type="ChEBI" id="CHEBI:128769"/>
    </ligand>
</feature>
<feature type="binding site" evidence="1">
    <location>
        <position position="74"/>
    </location>
    <ligand>
        <name>(2E)-4-hydroxy-3-methylbut-2-enyl diphosphate</name>
        <dbReference type="ChEBI" id="CHEBI:128753"/>
    </ligand>
</feature>
<feature type="binding site" evidence="1">
    <location>
        <position position="74"/>
    </location>
    <ligand>
        <name>dimethylallyl diphosphate</name>
        <dbReference type="ChEBI" id="CHEBI:57623"/>
    </ligand>
</feature>
<feature type="binding site" evidence="1">
    <location>
        <position position="74"/>
    </location>
    <ligand>
        <name>isopentenyl diphosphate</name>
        <dbReference type="ChEBI" id="CHEBI:128769"/>
    </ligand>
</feature>
<feature type="binding site" evidence="1">
    <location>
        <position position="96"/>
    </location>
    <ligand>
        <name>[4Fe-4S] cluster</name>
        <dbReference type="ChEBI" id="CHEBI:49883"/>
    </ligand>
</feature>
<feature type="binding site" evidence="1">
    <location>
        <position position="124"/>
    </location>
    <ligand>
        <name>(2E)-4-hydroxy-3-methylbut-2-enyl diphosphate</name>
        <dbReference type="ChEBI" id="CHEBI:128753"/>
    </ligand>
</feature>
<feature type="binding site" evidence="1">
    <location>
        <position position="124"/>
    </location>
    <ligand>
        <name>dimethylallyl diphosphate</name>
        <dbReference type="ChEBI" id="CHEBI:57623"/>
    </ligand>
</feature>
<feature type="binding site" evidence="1">
    <location>
        <position position="124"/>
    </location>
    <ligand>
        <name>isopentenyl diphosphate</name>
        <dbReference type="ChEBI" id="CHEBI:128769"/>
    </ligand>
</feature>
<feature type="binding site" evidence="1">
    <location>
        <position position="167"/>
    </location>
    <ligand>
        <name>(2E)-4-hydroxy-3-methylbut-2-enyl diphosphate</name>
        <dbReference type="ChEBI" id="CHEBI:128753"/>
    </ligand>
</feature>
<feature type="binding site" evidence="1">
    <location>
        <position position="197"/>
    </location>
    <ligand>
        <name>[4Fe-4S] cluster</name>
        <dbReference type="ChEBI" id="CHEBI:49883"/>
    </ligand>
</feature>
<feature type="binding site" evidence="1">
    <location>
        <position position="225"/>
    </location>
    <ligand>
        <name>(2E)-4-hydroxy-3-methylbut-2-enyl diphosphate</name>
        <dbReference type="ChEBI" id="CHEBI:128753"/>
    </ligand>
</feature>
<feature type="binding site" evidence="1">
    <location>
        <position position="225"/>
    </location>
    <ligand>
        <name>dimethylallyl diphosphate</name>
        <dbReference type="ChEBI" id="CHEBI:57623"/>
    </ligand>
</feature>
<feature type="binding site" evidence="1">
    <location>
        <position position="225"/>
    </location>
    <ligand>
        <name>isopentenyl diphosphate</name>
        <dbReference type="ChEBI" id="CHEBI:128769"/>
    </ligand>
</feature>
<feature type="binding site" evidence="1">
    <location>
        <position position="226"/>
    </location>
    <ligand>
        <name>(2E)-4-hydroxy-3-methylbut-2-enyl diphosphate</name>
        <dbReference type="ChEBI" id="CHEBI:128753"/>
    </ligand>
</feature>
<feature type="binding site" evidence="1">
    <location>
        <position position="226"/>
    </location>
    <ligand>
        <name>dimethylallyl diphosphate</name>
        <dbReference type="ChEBI" id="CHEBI:57623"/>
    </ligand>
</feature>
<feature type="binding site" evidence="1">
    <location>
        <position position="226"/>
    </location>
    <ligand>
        <name>isopentenyl diphosphate</name>
        <dbReference type="ChEBI" id="CHEBI:128769"/>
    </ligand>
</feature>
<feature type="binding site" evidence="1">
    <location>
        <position position="227"/>
    </location>
    <ligand>
        <name>(2E)-4-hydroxy-3-methylbut-2-enyl diphosphate</name>
        <dbReference type="ChEBI" id="CHEBI:128753"/>
    </ligand>
</feature>
<feature type="binding site" evidence="1">
    <location>
        <position position="227"/>
    </location>
    <ligand>
        <name>dimethylallyl diphosphate</name>
        <dbReference type="ChEBI" id="CHEBI:57623"/>
    </ligand>
</feature>
<feature type="binding site" evidence="1">
    <location>
        <position position="227"/>
    </location>
    <ligand>
        <name>isopentenyl diphosphate</name>
        <dbReference type="ChEBI" id="CHEBI:128769"/>
    </ligand>
</feature>
<feature type="binding site" evidence="1">
    <location>
        <position position="269"/>
    </location>
    <ligand>
        <name>(2E)-4-hydroxy-3-methylbut-2-enyl diphosphate</name>
        <dbReference type="ChEBI" id="CHEBI:128753"/>
    </ligand>
</feature>
<feature type="binding site" evidence="1">
    <location>
        <position position="269"/>
    </location>
    <ligand>
        <name>dimethylallyl diphosphate</name>
        <dbReference type="ChEBI" id="CHEBI:57623"/>
    </ligand>
</feature>
<feature type="binding site" evidence="1">
    <location>
        <position position="269"/>
    </location>
    <ligand>
        <name>isopentenyl diphosphate</name>
        <dbReference type="ChEBI" id="CHEBI:128769"/>
    </ligand>
</feature>
<reference key="1">
    <citation type="submission" date="2008-06" db="EMBL/GenBank/DDBJ databases">
        <title>Genome and proteome analysis of A. pleuropneumoniae serotype 7.</title>
        <authorList>
            <person name="Linke B."/>
            <person name="Buettner F."/>
            <person name="Martinez-Arias R."/>
            <person name="Goesmann A."/>
            <person name="Baltes N."/>
            <person name="Tegetmeyer H."/>
            <person name="Singh M."/>
            <person name="Gerlach G.F."/>
        </authorList>
    </citation>
    <scope>NUCLEOTIDE SEQUENCE [LARGE SCALE GENOMIC DNA]</scope>
    <source>
        <strain>AP76</strain>
    </source>
</reference>
<accession>B3GYK1</accession>